<proteinExistence type="evidence at transcript level"/>
<dbReference type="GO" id="GO:0005576">
    <property type="term" value="C:extracellular region"/>
    <property type="evidence" value="ECO:0007669"/>
    <property type="project" value="UniProtKB-SubCell"/>
</dbReference>
<dbReference type="GO" id="GO:0090729">
    <property type="term" value="F:toxin activity"/>
    <property type="evidence" value="ECO:0007669"/>
    <property type="project" value="UniProtKB-KW"/>
</dbReference>
<dbReference type="CDD" id="cd23590">
    <property type="entry name" value="TFP_LU_ECD_Bou"/>
    <property type="match status" value="1"/>
</dbReference>
<dbReference type="Gene3D" id="2.10.60.10">
    <property type="entry name" value="CD59"/>
    <property type="match status" value="1"/>
</dbReference>
<dbReference type="InterPro" id="IPR045860">
    <property type="entry name" value="Snake_toxin-like_sf"/>
</dbReference>
<dbReference type="SUPFAM" id="SSF57302">
    <property type="entry name" value="Snake toxin-like"/>
    <property type="match status" value="1"/>
</dbReference>
<protein>
    <recommendedName>
        <fullName evidence="2">U-scoloptoxin(05)-Er2a</fullName>
        <shortName evidence="2">U-SLPTX(05)-Er2a</shortName>
    </recommendedName>
</protein>
<feature type="signal peptide" evidence="1">
    <location>
        <begin position="1"/>
        <end position="19"/>
    </location>
</feature>
<feature type="chain" id="PRO_0000446723" description="U-scoloptoxin(05)-Er2a" evidence="3">
    <location>
        <begin position="20"/>
        <end position="134"/>
    </location>
</feature>
<keyword id="KW-1015">Disulfide bond</keyword>
<keyword id="KW-0964">Secreted</keyword>
<keyword id="KW-0732">Signal</keyword>
<keyword id="KW-0800">Toxin</keyword>
<name>TX52A_ETHRU</name>
<reference key="1">
    <citation type="journal article" date="2014" name="Mol. Biol. Evol.">
        <title>Clawing through evolution: toxin diversification and convergence in the ancient lineage Chilopoda (centipedes).</title>
        <authorList>
            <person name="Undheim E.A."/>
            <person name="Jones A."/>
            <person name="Clauser K.R."/>
            <person name="Holland J.W."/>
            <person name="Pineda S.S."/>
            <person name="King G.F."/>
            <person name="Fry B.G."/>
        </authorList>
    </citation>
    <scope>NUCLEOTIDE SEQUENCE [MRNA]</scope>
    <scope>NOMENCLATURE</scope>
    <source>
        <tissue>Venom gland</tissue>
    </source>
</reference>
<evidence type="ECO:0000255" key="1"/>
<evidence type="ECO:0000303" key="2">
    <source>
    </source>
</evidence>
<evidence type="ECO:0000305" key="3"/>
<evidence type="ECO:0000305" key="4">
    <source>
    </source>
</evidence>
<accession>P0DPX9</accession>
<organism>
    <name type="scientific">Ethmostigmus rubripes</name>
    <name type="common">Giant centipede</name>
    <dbReference type="NCBI Taxonomy" id="62613"/>
    <lineage>
        <taxon>Eukaryota</taxon>
        <taxon>Metazoa</taxon>
        <taxon>Ecdysozoa</taxon>
        <taxon>Arthropoda</taxon>
        <taxon>Myriapoda</taxon>
        <taxon>Chilopoda</taxon>
        <taxon>Pleurostigmophora</taxon>
        <taxon>Scolopendromorpha</taxon>
        <taxon>Scolopendridae</taxon>
        <taxon>Ethmostigmus</taxon>
    </lineage>
</organism>
<comment type="subcellular location">
    <subcellularLocation>
        <location evidence="4">Secreted</location>
    </subcellularLocation>
</comment>
<comment type="tissue specificity">
    <text evidence="4">Expressed by the venom gland.</text>
</comment>
<comment type="PTM">
    <text evidence="3">Contains 5 disulfide bonds.</text>
</comment>
<comment type="miscellaneous">
    <text evidence="3">The scoloptoxin-05 family has remarkable similarities with the three-finger toxin family commonly found in snakes.</text>
</comment>
<comment type="similarity">
    <text evidence="3">Belongs to the scoloptoxin-05 family.</text>
</comment>
<comment type="online information" name="National Center for Biotechnology Information (NCBI)">
    <link uri="https://www.ncbi.nlm.nih.gov/nuccore/GASI01000193"/>
</comment>
<sequence length="134" mass="14621">MTFVVAAVVLLTVVPLATPLKCVQCDGPLTEFDCKTTVPEAKDCPQLNTHCFRNDTFNSKNELIMVRRGCTNEKEPSPPCQEVGNGGRRCTYTCNSDGCNNAPGFAIAIEPSRMVIFIVTFSVMISFILHTSAN</sequence>